<protein>
    <recommendedName>
        <fullName evidence="1">Protein nucleotidyltransferase YdiU</fullName>
        <ecNumber evidence="1">2.7.7.-</ecNumber>
    </recommendedName>
    <alternativeName>
        <fullName evidence="1">Protein adenylyltransferase YdiU</fullName>
        <ecNumber evidence="1">2.7.7.108</ecNumber>
    </alternativeName>
    <alternativeName>
        <fullName evidence="1">Protein uridylyltransferase YdiU</fullName>
        <ecNumber evidence="1">2.7.7.-</ecNumber>
    </alternativeName>
</protein>
<sequence>MTEQAKWNFDNSYARLPQPFFARLKPNPVRSPKLVLFNEPLATALGLNGEALQQPEGVAVLAGNVIPEGGEALAQAYAGHQFGHFTMLGDGRALLIGEQITPDGNRFDIQLKGSGRTPFSRGGDGRAALGPMLREFLISEAMHALGIPTTRSLAVVTTGEEIWRETELPGAVLTRVAESHLRVGTFQYAAGRGEVNDVKTLADYAIKRHYPELAESENPYLSLLEQVITRQANLISQWQLVGFVHGVMNTDNMTISGETIDYGPCAFMDTYDPATVFSSIDTQGRYAYGNQPQIANWNLARFAETLVPLLAEDETKGVEMAQSAIEGFKGQYVSNWLAGIRKKLGLFNAEDGDKDFVEKLLRLMHEHEADYTNTFRLLTLGQPEKTAMNGAAEFSEWLEQWQQRQSRQAQTKDEAMKLMRTNNPAVIPRNHRVEEALAAAVDEEDDSLVKQLIAVLKEPYAYSEEQERYAEVPERCQHGYVTYCGT</sequence>
<name>SELO_SHOC1</name>
<proteinExistence type="inferred from homology"/>
<organism>
    <name type="scientific">Shouchella clausii (strain KSM-K16)</name>
    <name type="common">Alkalihalobacillus clausii</name>
    <dbReference type="NCBI Taxonomy" id="66692"/>
    <lineage>
        <taxon>Bacteria</taxon>
        <taxon>Bacillati</taxon>
        <taxon>Bacillota</taxon>
        <taxon>Bacilli</taxon>
        <taxon>Bacillales</taxon>
        <taxon>Bacillaceae</taxon>
        <taxon>Shouchella</taxon>
    </lineage>
</organism>
<accession>Q5WIY8</accession>
<gene>
    <name evidence="1" type="primary">ydiU</name>
    <name evidence="1" type="synonym">selO</name>
    <name type="ordered locus">ABC1129</name>
</gene>
<feature type="chain" id="PRO_0000271808" description="Protein nucleotidyltransferase YdiU">
    <location>
        <begin position="1"/>
        <end position="486"/>
    </location>
</feature>
<feature type="active site" description="Proton acceptor" evidence="1">
    <location>
        <position position="251"/>
    </location>
</feature>
<feature type="binding site" evidence="1">
    <location>
        <position position="89"/>
    </location>
    <ligand>
        <name>ATP</name>
        <dbReference type="ChEBI" id="CHEBI:30616"/>
    </ligand>
</feature>
<feature type="binding site" evidence="1">
    <location>
        <position position="91"/>
    </location>
    <ligand>
        <name>ATP</name>
        <dbReference type="ChEBI" id="CHEBI:30616"/>
    </ligand>
</feature>
<feature type="binding site" evidence="1">
    <location>
        <position position="92"/>
    </location>
    <ligand>
        <name>ATP</name>
        <dbReference type="ChEBI" id="CHEBI:30616"/>
    </ligand>
</feature>
<feature type="binding site" evidence="1">
    <location>
        <position position="112"/>
    </location>
    <ligand>
        <name>ATP</name>
        <dbReference type="ChEBI" id="CHEBI:30616"/>
    </ligand>
</feature>
<feature type="binding site" evidence="1">
    <location>
        <position position="124"/>
    </location>
    <ligand>
        <name>ATP</name>
        <dbReference type="ChEBI" id="CHEBI:30616"/>
    </ligand>
</feature>
<feature type="binding site" evidence="1">
    <location>
        <position position="125"/>
    </location>
    <ligand>
        <name>ATP</name>
        <dbReference type="ChEBI" id="CHEBI:30616"/>
    </ligand>
</feature>
<feature type="binding site" evidence="1">
    <location>
        <position position="175"/>
    </location>
    <ligand>
        <name>ATP</name>
        <dbReference type="ChEBI" id="CHEBI:30616"/>
    </ligand>
</feature>
<feature type="binding site" evidence="1">
    <location>
        <position position="182"/>
    </location>
    <ligand>
        <name>ATP</name>
        <dbReference type="ChEBI" id="CHEBI:30616"/>
    </ligand>
</feature>
<feature type="binding site" evidence="1">
    <location>
        <position position="252"/>
    </location>
    <ligand>
        <name>Mg(2+)</name>
        <dbReference type="ChEBI" id="CHEBI:18420"/>
    </ligand>
</feature>
<feature type="binding site" evidence="1">
    <location>
        <position position="261"/>
    </location>
    <ligand>
        <name>ATP</name>
        <dbReference type="ChEBI" id="CHEBI:30616"/>
    </ligand>
</feature>
<feature type="binding site" evidence="1">
    <location>
        <position position="261"/>
    </location>
    <ligand>
        <name>Mg(2+)</name>
        <dbReference type="ChEBI" id="CHEBI:18420"/>
    </ligand>
</feature>
<keyword id="KW-0067">ATP-binding</keyword>
<keyword id="KW-0460">Magnesium</keyword>
<keyword id="KW-0464">Manganese</keyword>
<keyword id="KW-0479">Metal-binding</keyword>
<keyword id="KW-0547">Nucleotide-binding</keyword>
<keyword id="KW-0548">Nucleotidyltransferase</keyword>
<keyword id="KW-1185">Reference proteome</keyword>
<keyword id="KW-0808">Transferase</keyword>
<comment type="function">
    <text evidence="1">Nucleotidyltransferase involved in the post-translational modification of proteins. It can catalyze the addition of adenosine monophosphate (AMP) or uridine monophosphate (UMP) to a protein, resulting in modifications known as AMPylation and UMPylation.</text>
</comment>
<comment type="catalytic activity">
    <reaction evidence="1">
        <text>L-seryl-[protein] + ATP = 3-O-(5'-adenylyl)-L-seryl-[protein] + diphosphate</text>
        <dbReference type="Rhea" id="RHEA:58120"/>
        <dbReference type="Rhea" id="RHEA-COMP:9863"/>
        <dbReference type="Rhea" id="RHEA-COMP:15073"/>
        <dbReference type="ChEBI" id="CHEBI:29999"/>
        <dbReference type="ChEBI" id="CHEBI:30616"/>
        <dbReference type="ChEBI" id="CHEBI:33019"/>
        <dbReference type="ChEBI" id="CHEBI:142516"/>
        <dbReference type="EC" id="2.7.7.108"/>
    </reaction>
</comment>
<comment type="catalytic activity">
    <reaction evidence="1">
        <text>L-threonyl-[protein] + ATP = 3-O-(5'-adenylyl)-L-threonyl-[protein] + diphosphate</text>
        <dbReference type="Rhea" id="RHEA:54292"/>
        <dbReference type="Rhea" id="RHEA-COMP:11060"/>
        <dbReference type="Rhea" id="RHEA-COMP:13847"/>
        <dbReference type="ChEBI" id="CHEBI:30013"/>
        <dbReference type="ChEBI" id="CHEBI:30616"/>
        <dbReference type="ChEBI" id="CHEBI:33019"/>
        <dbReference type="ChEBI" id="CHEBI:138113"/>
        <dbReference type="EC" id="2.7.7.108"/>
    </reaction>
</comment>
<comment type="catalytic activity">
    <reaction evidence="1">
        <text>L-tyrosyl-[protein] + ATP = O-(5'-adenylyl)-L-tyrosyl-[protein] + diphosphate</text>
        <dbReference type="Rhea" id="RHEA:54288"/>
        <dbReference type="Rhea" id="RHEA-COMP:10136"/>
        <dbReference type="Rhea" id="RHEA-COMP:13846"/>
        <dbReference type="ChEBI" id="CHEBI:30616"/>
        <dbReference type="ChEBI" id="CHEBI:33019"/>
        <dbReference type="ChEBI" id="CHEBI:46858"/>
        <dbReference type="ChEBI" id="CHEBI:83624"/>
        <dbReference type="EC" id="2.7.7.108"/>
    </reaction>
</comment>
<comment type="catalytic activity">
    <reaction evidence="1">
        <text>L-histidyl-[protein] + UTP = N(tele)-(5'-uridylyl)-L-histidyl-[protein] + diphosphate</text>
        <dbReference type="Rhea" id="RHEA:83891"/>
        <dbReference type="Rhea" id="RHEA-COMP:9745"/>
        <dbReference type="Rhea" id="RHEA-COMP:20239"/>
        <dbReference type="ChEBI" id="CHEBI:29979"/>
        <dbReference type="ChEBI" id="CHEBI:33019"/>
        <dbReference type="ChEBI" id="CHEBI:46398"/>
        <dbReference type="ChEBI" id="CHEBI:233474"/>
    </reaction>
</comment>
<comment type="catalytic activity">
    <reaction evidence="1">
        <text>L-seryl-[protein] + UTP = O-(5'-uridylyl)-L-seryl-[protein] + diphosphate</text>
        <dbReference type="Rhea" id="RHEA:64604"/>
        <dbReference type="Rhea" id="RHEA-COMP:9863"/>
        <dbReference type="Rhea" id="RHEA-COMP:16635"/>
        <dbReference type="ChEBI" id="CHEBI:29999"/>
        <dbReference type="ChEBI" id="CHEBI:33019"/>
        <dbReference type="ChEBI" id="CHEBI:46398"/>
        <dbReference type="ChEBI" id="CHEBI:156051"/>
    </reaction>
</comment>
<comment type="catalytic activity">
    <reaction evidence="1">
        <text>L-tyrosyl-[protein] + UTP = O-(5'-uridylyl)-L-tyrosyl-[protein] + diphosphate</text>
        <dbReference type="Rhea" id="RHEA:83887"/>
        <dbReference type="Rhea" id="RHEA-COMP:10136"/>
        <dbReference type="Rhea" id="RHEA-COMP:20238"/>
        <dbReference type="ChEBI" id="CHEBI:33019"/>
        <dbReference type="ChEBI" id="CHEBI:46398"/>
        <dbReference type="ChEBI" id="CHEBI:46858"/>
        <dbReference type="ChEBI" id="CHEBI:90602"/>
    </reaction>
</comment>
<comment type="cofactor">
    <cofactor evidence="1">
        <name>Mg(2+)</name>
        <dbReference type="ChEBI" id="CHEBI:18420"/>
    </cofactor>
    <cofactor evidence="1">
        <name>Mn(2+)</name>
        <dbReference type="ChEBI" id="CHEBI:29035"/>
    </cofactor>
</comment>
<comment type="similarity">
    <text evidence="1">Belongs to the SELO family.</text>
</comment>
<evidence type="ECO:0000255" key="1">
    <source>
        <dbReference type="HAMAP-Rule" id="MF_00692"/>
    </source>
</evidence>
<dbReference type="EC" id="2.7.7.-" evidence="1"/>
<dbReference type="EC" id="2.7.7.108" evidence="1"/>
<dbReference type="EMBL" id="AP006627">
    <property type="protein sequence ID" value="BAD63667.1"/>
    <property type="molecule type" value="Genomic_DNA"/>
</dbReference>
<dbReference type="RefSeq" id="WP_011245982.1">
    <property type="nucleotide sequence ID" value="NC_006582.1"/>
</dbReference>
<dbReference type="SMR" id="Q5WIY8"/>
<dbReference type="STRING" id="66692.ABC1129"/>
<dbReference type="KEGG" id="bcl:ABC1129"/>
<dbReference type="eggNOG" id="COG0397">
    <property type="taxonomic scope" value="Bacteria"/>
</dbReference>
<dbReference type="HOGENOM" id="CLU_010245_4_1_9"/>
<dbReference type="OrthoDB" id="9773505at2"/>
<dbReference type="Proteomes" id="UP000001168">
    <property type="component" value="Chromosome"/>
</dbReference>
<dbReference type="GO" id="GO:0070733">
    <property type="term" value="F:AMPylase activity"/>
    <property type="evidence" value="ECO:0007669"/>
    <property type="project" value="RHEA"/>
</dbReference>
<dbReference type="GO" id="GO:0005524">
    <property type="term" value="F:ATP binding"/>
    <property type="evidence" value="ECO:0007669"/>
    <property type="project" value="UniProtKB-UniRule"/>
</dbReference>
<dbReference type="GO" id="GO:0000287">
    <property type="term" value="F:magnesium ion binding"/>
    <property type="evidence" value="ECO:0007669"/>
    <property type="project" value="UniProtKB-UniRule"/>
</dbReference>
<dbReference type="HAMAP" id="MF_00692">
    <property type="entry name" value="YdiU_SelO"/>
    <property type="match status" value="1"/>
</dbReference>
<dbReference type="InterPro" id="IPR003846">
    <property type="entry name" value="SelO"/>
</dbReference>
<dbReference type="NCBIfam" id="NF000658">
    <property type="entry name" value="PRK00029.1"/>
    <property type="match status" value="1"/>
</dbReference>
<dbReference type="PANTHER" id="PTHR12153:SF15">
    <property type="entry name" value="PROTEIN ADENYLYLTRANSFERASE SELO, MITOCHONDRIAL"/>
    <property type="match status" value="1"/>
</dbReference>
<dbReference type="PANTHER" id="PTHR12153">
    <property type="entry name" value="SELENOPROTEIN O"/>
    <property type="match status" value="1"/>
</dbReference>
<dbReference type="Pfam" id="PF02696">
    <property type="entry name" value="SelO"/>
    <property type="match status" value="1"/>
</dbReference>
<reference key="1">
    <citation type="submission" date="2003-10" db="EMBL/GenBank/DDBJ databases">
        <title>The complete genome sequence of the alkaliphilic Bacillus clausii KSM-K16.</title>
        <authorList>
            <person name="Takaki Y."/>
            <person name="Kageyama Y."/>
            <person name="Shimamura S."/>
            <person name="Suzuki H."/>
            <person name="Nishi S."/>
            <person name="Hatada Y."/>
            <person name="Kawai S."/>
            <person name="Ito S."/>
            <person name="Horikoshi K."/>
        </authorList>
    </citation>
    <scope>NUCLEOTIDE SEQUENCE [LARGE SCALE GENOMIC DNA]</scope>
    <source>
        <strain>KSM-K16</strain>
    </source>
</reference>